<accession>P98173</accession>
<accession>A6QRH6</accession>
<accession>B2RBI7</accession>
<accession>B4DFI8</accession>
<accession>D3DWX4</accession>
<accession>Q5HY76</accession>
<accession>Q96H51</accession>
<keyword id="KW-0025">Alternative splicing</keyword>
<keyword id="KW-1015">Disulfide bond</keyword>
<keyword id="KW-0430">Lectin</keyword>
<keyword id="KW-1267">Proteomics identification</keyword>
<keyword id="KW-1185">Reference proteome</keyword>
<keyword id="KW-0964">Secreted</keyword>
<keyword id="KW-0732">Signal</keyword>
<gene>
    <name type="primary">FAM3A</name>
    <name type="synonym">2-19</name>
    <name type="synonym">2.19</name>
</gene>
<name>FAM3A_HUMAN</name>
<protein>
    <recommendedName>
        <fullName>Protein FAM3A</fullName>
    </recommendedName>
    <alternativeName>
        <fullName>Cytokine-like protein 2-19</fullName>
    </alternativeName>
</protein>
<sequence length="230" mass="25152">MRLAGPLRIVVLVVSVGVTWIVVSILLGGPGSGFPRIQQLFTSPESSVTAAPRARKYKCGLPQPCPEEHLAFRVVSGAANVIGPKICLEDKMLMSSVKDNVGRGLNIALVNGVSGELIEARAFDMWAGDVNDLLKFIRPLHEGTLVFVASYDDPATKMNEETRKLFSELGSRNAKELAFRDSWVFVGAKGVQNKSPFEQHVKNSKHSNKYEGWPEALEMEGCIPRRSTAS</sequence>
<evidence type="ECO:0000250" key="1"/>
<evidence type="ECO:0000255" key="2"/>
<evidence type="ECO:0000255" key="3">
    <source>
        <dbReference type="PROSITE-ProRule" id="PRU01375"/>
    </source>
</evidence>
<evidence type="ECO:0000269" key="4">
    <source>
    </source>
</evidence>
<evidence type="ECO:0000269" key="5">
    <source>
    </source>
</evidence>
<evidence type="ECO:0000269" key="6">
    <source ref="2"/>
</evidence>
<evidence type="ECO:0000303" key="7">
    <source>
    </source>
</evidence>
<evidence type="ECO:0000305" key="8"/>
<feature type="signal peptide" evidence="2">
    <location>
        <begin position="1"/>
        <end position="33"/>
    </location>
</feature>
<feature type="chain" id="PRO_0000008748" description="Protein FAM3A">
    <location>
        <begin position="34"/>
        <end position="230"/>
    </location>
</feature>
<feature type="domain" description="GG-type lectin" evidence="3">
    <location>
        <begin position="68"/>
        <end position="226"/>
    </location>
</feature>
<feature type="disulfide bond" evidence="1">
    <location>
        <begin position="59"/>
        <end position="87"/>
    </location>
</feature>
<feature type="disulfide bond" evidence="1">
    <location>
        <begin position="65"/>
        <end position="222"/>
    </location>
</feature>
<feature type="splice variant" id="VSP_046733" description="In isoform 3." evidence="8">
    <location>
        <begin position="6"/>
        <end position="43"/>
    </location>
</feature>
<feature type="splice variant" id="VSP_042778" description="In isoform 2." evidence="7">
    <location>
        <begin position="112"/>
        <end position="128"/>
    </location>
</feature>
<feature type="sequence variant" id="VAR_057531" description="In dbSNP:rs35985994.">
    <original>I</original>
    <variation>M</variation>
    <location>
        <position position="21"/>
    </location>
</feature>
<feature type="sequence variant" id="VAR_011923" description="In dbSNP:rs1050788." evidence="4 5 6">
    <original>W</original>
    <variation>C</variation>
    <location>
        <position position="213"/>
    </location>
</feature>
<proteinExistence type="evidence at protein level"/>
<organism>
    <name type="scientific">Homo sapiens</name>
    <name type="common">Human</name>
    <dbReference type="NCBI Taxonomy" id="9606"/>
    <lineage>
        <taxon>Eukaryota</taxon>
        <taxon>Metazoa</taxon>
        <taxon>Chordata</taxon>
        <taxon>Craniata</taxon>
        <taxon>Vertebrata</taxon>
        <taxon>Euteleostomi</taxon>
        <taxon>Mammalia</taxon>
        <taxon>Eutheria</taxon>
        <taxon>Euarchontoglires</taxon>
        <taxon>Primates</taxon>
        <taxon>Haplorrhini</taxon>
        <taxon>Catarrhini</taxon>
        <taxon>Hominidae</taxon>
        <taxon>Homo</taxon>
    </lineage>
</organism>
<reference key="1">
    <citation type="journal article" date="1993" name="Proc. Natl. Acad. Sci. U.S.A.">
        <title>Transcriptional organization of a 450-kb region of the human X chromosome in Xq28.</title>
        <authorList>
            <person name="Bione S."/>
            <person name="Tamanini F."/>
            <person name="Maestrini E."/>
            <person name="Tribioli C."/>
            <person name="Poustka A."/>
            <person name="Torri G."/>
            <person name="Rivella S."/>
            <person name="Toniolo D."/>
        </authorList>
    </citation>
    <scope>NUCLEOTIDE SEQUENCE [MRNA] (ISOFORM 1)</scope>
    <scope>VARIANT CYS-213</scope>
    <source>
        <tissue>Fetal brain</tissue>
    </source>
</reference>
<reference key="2">
    <citation type="submission" date="1991-05" db="EMBL/GenBank/DDBJ databases">
        <authorList>
            <person name="Zollo M."/>
            <person name="Mazzarella R."/>
            <person name="Bione S."/>
            <person name="Toniolo D."/>
            <person name="Schlessinger D."/>
            <person name="D'Urso M."/>
            <person name="Chen E.Y."/>
        </authorList>
    </citation>
    <scope>NUCLEOTIDE SEQUENCE [GENOMIC DNA]</scope>
    <scope>VARIANT CYS-213</scope>
</reference>
<reference key="3">
    <citation type="journal article" date="1996" name="Hum. Mol. Genet.">
        <title>Long-range sequence analysis in Xq28: thirteen known and six candidate genes in 219.4 kb of high GC DNA between the RCP/GCP and G6PD loci.</title>
        <authorList>
            <person name="Chen E.Y."/>
            <person name="Zollo M."/>
            <person name="Mazzarella R.A."/>
            <person name="Ciccodicola A."/>
            <person name="Chen C.-N."/>
            <person name="Zuo L."/>
            <person name="Heiner C."/>
            <person name="Burough F.W."/>
            <person name="Ripetto M."/>
            <person name="Schlessinger D."/>
            <person name="D'Urso M."/>
        </authorList>
    </citation>
    <scope>NUCLEOTIDE SEQUENCE [GENOMIC DNA]</scope>
    <scope>VARIANT CYS-213</scope>
</reference>
<reference key="4">
    <citation type="journal article" date="2004" name="Nat. Genet.">
        <title>Complete sequencing and characterization of 21,243 full-length human cDNAs.</title>
        <authorList>
            <person name="Ota T."/>
            <person name="Suzuki Y."/>
            <person name="Nishikawa T."/>
            <person name="Otsuki T."/>
            <person name="Sugiyama T."/>
            <person name="Irie R."/>
            <person name="Wakamatsu A."/>
            <person name="Hayashi K."/>
            <person name="Sato H."/>
            <person name="Nagai K."/>
            <person name="Kimura K."/>
            <person name="Makita H."/>
            <person name="Sekine M."/>
            <person name="Obayashi M."/>
            <person name="Nishi T."/>
            <person name="Shibahara T."/>
            <person name="Tanaka T."/>
            <person name="Ishii S."/>
            <person name="Yamamoto J."/>
            <person name="Saito K."/>
            <person name="Kawai Y."/>
            <person name="Isono Y."/>
            <person name="Nakamura Y."/>
            <person name="Nagahari K."/>
            <person name="Murakami K."/>
            <person name="Yasuda T."/>
            <person name="Iwayanagi T."/>
            <person name="Wagatsuma M."/>
            <person name="Shiratori A."/>
            <person name="Sudo H."/>
            <person name="Hosoiri T."/>
            <person name="Kaku Y."/>
            <person name="Kodaira H."/>
            <person name="Kondo H."/>
            <person name="Sugawara M."/>
            <person name="Takahashi M."/>
            <person name="Kanda K."/>
            <person name="Yokoi T."/>
            <person name="Furuya T."/>
            <person name="Kikkawa E."/>
            <person name="Omura Y."/>
            <person name="Abe K."/>
            <person name="Kamihara K."/>
            <person name="Katsuta N."/>
            <person name="Sato K."/>
            <person name="Tanikawa M."/>
            <person name="Yamazaki M."/>
            <person name="Ninomiya K."/>
            <person name="Ishibashi T."/>
            <person name="Yamashita H."/>
            <person name="Murakawa K."/>
            <person name="Fujimori K."/>
            <person name="Tanai H."/>
            <person name="Kimata M."/>
            <person name="Watanabe M."/>
            <person name="Hiraoka S."/>
            <person name="Chiba Y."/>
            <person name="Ishida S."/>
            <person name="Ono Y."/>
            <person name="Takiguchi S."/>
            <person name="Watanabe S."/>
            <person name="Yosida M."/>
            <person name="Hotuta T."/>
            <person name="Kusano J."/>
            <person name="Kanehori K."/>
            <person name="Takahashi-Fujii A."/>
            <person name="Hara H."/>
            <person name="Tanase T.-O."/>
            <person name="Nomura Y."/>
            <person name="Togiya S."/>
            <person name="Komai F."/>
            <person name="Hara R."/>
            <person name="Takeuchi K."/>
            <person name="Arita M."/>
            <person name="Imose N."/>
            <person name="Musashino K."/>
            <person name="Yuuki H."/>
            <person name="Oshima A."/>
            <person name="Sasaki N."/>
            <person name="Aotsuka S."/>
            <person name="Yoshikawa Y."/>
            <person name="Matsunawa H."/>
            <person name="Ichihara T."/>
            <person name="Shiohata N."/>
            <person name="Sano S."/>
            <person name="Moriya S."/>
            <person name="Momiyama H."/>
            <person name="Satoh N."/>
            <person name="Takami S."/>
            <person name="Terashima Y."/>
            <person name="Suzuki O."/>
            <person name="Nakagawa S."/>
            <person name="Senoh A."/>
            <person name="Mizoguchi H."/>
            <person name="Goto Y."/>
            <person name="Shimizu F."/>
            <person name="Wakebe H."/>
            <person name="Hishigaki H."/>
            <person name="Watanabe T."/>
            <person name="Sugiyama A."/>
            <person name="Takemoto M."/>
            <person name="Kawakami B."/>
            <person name="Yamazaki M."/>
            <person name="Watanabe K."/>
            <person name="Kumagai A."/>
            <person name="Itakura S."/>
            <person name="Fukuzumi Y."/>
            <person name="Fujimori Y."/>
            <person name="Komiyama M."/>
            <person name="Tashiro H."/>
            <person name="Tanigami A."/>
            <person name="Fujiwara T."/>
            <person name="Ono T."/>
            <person name="Yamada K."/>
            <person name="Fujii Y."/>
            <person name="Ozaki K."/>
            <person name="Hirao M."/>
            <person name="Ohmori Y."/>
            <person name="Kawabata A."/>
            <person name="Hikiji T."/>
            <person name="Kobatake N."/>
            <person name="Inagaki H."/>
            <person name="Ikema Y."/>
            <person name="Okamoto S."/>
            <person name="Okitani R."/>
            <person name="Kawakami T."/>
            <person name="Noguchi S."/>
            <person name="Itoh T."/>
            <person name="Shigeta K."/>
            <person name="Senba T."/>
            <person name="Matsumura K."/>
            <person name="Nakajima Y."/>
            <person name="Mizuno T."/>
            <person name="Morinaga M."/>
            <person name="Sasaki M."/>
            <person name="Togashi T."/>
            <person name="Oyama M."/>
            <person name="Hata H."/>
            <person name="Watanabe M."/>
            <person name="Komatsu T."/>
            <person name="Mizushima-Sugano J."/>
            <person name="Satoh T."/>
            <person name="Shirai Y."/>
            <person name="Takahashi Y."/>
            <person name="Nakagawa K."/>
            <person name="Okumura K."/>
            <person name="Nagase T."/>
            <person name="Nomura N."/>
            <person name="Kikuchi H."/>
            <person name="Masuho Y."/>
            <person name="Yamashita R."/>
            <person name="Nakai K."/>
            <person name="Yada T."/>
            <person name="Nakamura Y."/>
            <person name="Ohara O."/>
            <person name="Isogai T."/>
            <person name="Sugano S."/>
        </authorList>
    </citation>
    <scope>NUCLEOTIDE SEQUENCE [LARGE SCALE MRNA] (ISOFORMS 1 AND 2)</scope>
    <source>
        <tissue>Brain cortex</tissue>
        <tissue>Colon</tissue>
    </source>
</reference>
<reference key="5">
    <citation type="journal article" date="2005" name="Nature">
        <title>The DNA sequence of the human X chromosome.</title>
        <authorList>
            <person name="Ross M.T."/>
            <person name="Grafham D.V."/>
            <person name="Coffey A.J."/>
            <person name="Scherer S."/>
            <person name="McLay K."/>
            <person name="Muzny D."/>
            <person name="Platzer M."/>
            <person name="Howell G.R."/>
            <person name="Burrows C."/>
            <person name="Bird C.P."/>
            <person name="Frankish A."/>
            <person name="Lovell F.L."/>
            <person name="Howe K.L."/>
            <person name="Ashurst J.L."/>
            <person name="Fulton R.S."/>
            <person name="Sudbrak R."/>
            <person name="Wen G."/>
            <person name="Jones M.C."/>
            <person name="Hurles M.E."/>
            <person name="Andrews T.D."/>
            <person name="Scott C.E."/>
            <person name="Searle S."/>
            <person name="Ramser J."/>
            <person name="Whittaker A."/>
            <person name="Deadman R."/>
            <person name="Carter N.P."/>
            <person name="Hunt S.E."/>
            <person name="Chen R."/>
            <person name="Cree A."/>
            <person name="Gunaratne P."/>
            <person name="Havlak P."/>
            <person name="Hodgson A."/>
            <person name="Metzker M.L."/>
            <person name="Richards S."/>
            <person name="Scott G."/>
            <person name="Steffen D."/>
            <person name="Sodergren E."/>
            <person name="Wheeler D.A."/>
            <person name="Worley K.C."/>
            <person name="Ainscough R."/>
            <person name="Ambrose K.D."/>
            <person name="Ansari-Lari M.A."/>
            <person name="Aradhya S."/>
            <person name="Ashwell R.I."/>
            <person name="Babbage A.K."/>
            <person name="Bagguley C.L."/>
            <person name="Ballabio A."/>
            <person name="Banerjee R."/>
            <person name="Barker G.E."/>
            <person name="Barlow K.F."/>
            <person name="Barrett I.P."/>
            <person name="Bates K.N."/>
            <person name="Beare D.M."/>
            <person name="Beasley H."/>
            <person name="Beasley O."/>
            <person name="Beck A."/>
            <person name="Bethel G."/>
            <person name="Blechschmidt K."/>
            <person name="Brady N."/>
            <person name="Bray-Allen S."/>
            <person name="Bridgeman A.M."/>
            <person name="Brown A.J."/>
            <person name="Brown M.J."/>
            <person name="Bonnin D."/>
            <person name="Bruford E.A."/>
            <person name="Buhay C."/>
            <person name="Burch P."/>
            <person name="Burford D."/>
            <person name="Burgess J."/>
            <person name="Burrill W."/>
            <person name="Burton J."/>
            <person name="Bye J.M."/>
            <person name="Carder C."/>
            <person name="Carrel L."/>
            <person name="Chako J."/>
            <person name="Chapman J.C."/>
            <person name="Chavez D."/>
            <person name="Chen E."/>
            <person name="Chen G."/>
            <person name="Chen Y."/>
            <person name="Chen Z."/>
            <person name="Chinault C."/>
            <person name="Ciccodicola A."/>
            <person name="Clark S.Y."/>
            <person name="Clarke G."/>
            <person name="Clee C.M."/>
            <person name="Clegg S."/>
            <person name="Clerc-Blankenburg K."/>
            <person name="Clifford K."/>
            <person name="Cobley V."/>
            <person name="Cole C.G."/>
            <person name="Conquer J.S."/>
            <person name="Corby N."/>
            <person name="Connor R.E."/>
            <person name="David R."/>
            <person name="Davies J."/>
            <person name="Davis C."/>
            <person name="Davis J."/>
            <person name="Delgado O."/>
            <person name="Deshazo D."/>
            <person name="Dhami P."/>
            <person name="Ding Y."/>
            <person name="Dinh H."/>
            <person name="Dodsworth S."/>
            <person name="Draper H."/>
            <person name="Dugan-Rocha S."/>
            <person name="Dunham A."/>
            <person name="Dunn M."/>
            <person name="Durbin K.J."/>
            <person name="Dutta I."/>
            <person name="Eades T."/>
            <person name="Ellwood M."/>
            <person name="Emery-Cohen A."/>
            <person name="Errington H."/>
            <person name="Evans K.L."/>
            <person name="Faulkner L."/>
            <person name="Francis F."/>
            <person name="Frankland J."/>
            <person name="Fraser A.E."/>
            <person name="Galgoczy P."/>
            <person name="Gilbert J."/>
            <person name="Gill R."/>
            <person name="Gloeckner G."/>
            <person name="Gregory S.G."/>
            <person name="Gribble S."/>
            <person name="Griffiths C."/>
            <person name="Grocock R."/>
            <person name="Gu Y."/>
            <person name="Gwilliam R."/>
            <person name="Hamilton C."/>
            <person name="Hart E.A."/>
            <person name="Hawes A."/>
            <person name="Heath P.D."/>
            <person name="Heitmann K."/>
            <person name="Hennig S."/>
            <person name="Hernandez J."/>
            <person name="Hinzmann B."/>
            <person name="Ho S."/>
            <person name="Hoffs M."/>
            <person name="Howden P.J."/>
            <person name="Huckle E.J."/>
            <person name="Hume J."/>
            <person name="Hunt P.J."/>
            <person name="Hunt A.R."/>
            <person name="Isherwood J."/>
            <person name="Jacob L."/>
            <person name="Johnson D."/>
            <person name="Jones S."/>
            <person name="de Jong P.J."/>
            <person name="Joseph S.S."/>
            <person name="Keenan S."/>
            <person name="Kelly S."/>
            <person name="Kershaw J.K."/>
            <person name="Khan Z."/>
            <person name="Kioschis P."/>
            <person name="Klages S."/>
            <person name="Knights A.J."/>
            <person name="Kosiura A."/>
            <person name="Kovar-Smith C."/>
            <person name="Laird G.K."/>
            <person name="Langford C."/>
            <person name="Lawlor S."/>
            <person name="Leversha M."/>
            <person name="Lewis L."/>
            <person name="Liu W."/>
            <person name="Lloyd C."/>
            <person name="Lloyd D.M."/>
            <person name="Loulseged H."/>
            <person name="Loveland J.E."/>
            <person name="Lovell J.D."/>
            <person name="Lozado R."/>
            <person name="Lu J."/>
            <person name="Lyne R."/>
            <person name="Ma J."/>
            <person name="Maheshwari M."/>
            <person name="Matthews L.H."/>
            <person name="McDowall J."/>
            <person name="McLaren S."/>
            <person name="McMurray A."/>
            <person name="Meidl P."/>
            <person name="Meitinger T."/>
            <person name="Milne S."/>
            <person name="Miner G."/>
            <person name="Mistry S.L."/>
            <person name="Morgan M."/>
            <person name="Morris S."/>
            <person name="Mueller I."/>
            <person name="Mullikin J.C."/>
            <person name="Nguyen N."/>
            <person name="Nordsiek G."/>
            <person name="Nyakatura G."/>
            <person name="O'dell C.N."/>
            <person name="Okwuonu G."/>
            <person name="Palmer S."/>
            <person name="Pandian R."/>
            <person name="Parker D."/>
            <person name="Parrish J."/>
            <person name="Pasternak S."/>
            <person name="Patel D."/>
            <person name="Pearce A.V."/>
            <person name="Pearson D.M."/>
            <person name="Pelan S.E."/>
            <person name="Perez L."/>
            <person name="Porter K.M."/>
            <person name="Ramsey Y."/>
            <person name="Reichwald K."/>
            <person name="Rhodes S."/>
            <person name="Ridler K.A."/>
            <person name="Schlessinger D."/>
            <person name="Schueler M.G."/>
            <person name="Sehra H.K."/>
            <person name="Shaw-Smith C."/>
            <person name="Shen H."/>
            <person name="Sheridan E.M."/>
            <person name="Shownkeen R."/>
            <person name="Skuce C.D."/>
            <person name="Smith M.L."/>
            <person name="Sotheran E.C."/>
            <person name="Steingruber H.E."/>
            <person name="Steward C.A."/>
            <person name="Storey R."/>
            <person name="Swann R.M."/>
            <person name="Swarbreck D."/>
            <person name="Tabor P.E."/>
            <person name="Taudien S."/>
            <person name="Taylor T."/>
            <person name="Teague B."/>
            <person name="Thomas K."/>
            <person name="Thorpe A."/>
            <person name="Timms K."/>
            <person name="Tracey A."/>
            <person name="Trevanion S."/>
            <person name="Tromans A.C."/>
            <person name="d'Urso M."/>
            <person name="Verduzco D."/>
            <person name="Villasana D."/>
            <person name="Waldron L."/>
            <person name="Wall M."/>
            <person name="Wang Q."/>
            <person name="Warren J."/>
            <person name="Warry G.L."/>
            <person name="Wei X."/>
            <person name="West A."/>
            <person name="Whitehead S.L."/>
            <person name="Whiteley M.N."/>
            <person name="Wilkinson J.E."/>
            <person name="Willey D.L."/>
            <person name="Williams G."/>
            <person name="Williams L."/>
            <person name="Williamson A."/>
            <person name="Williamson H."/>
            <person name="Wilming L."/>
            <person name="Woodmansey R.L."/>
            <person name="Wray P.W."/>
            <person name="Yen J."/>
            <person name="Zhang J."/>
            <person name="Zhou J."/>
            <person name="Zoghbi H."/>
            <person name="Zorilla S."/>
            <person name="Buck D."/>
            <person name="Reinhardt R."/>
            <person name="Poustka A."/>
            <person name="Rosenthal A."/>
            <person name="Lehrach H."/>
            <person name="Meindl A."/>
            <person name="Minx P.J."/>
            <person name="Hillier L.W."/>
            <person name="Willard H.F."/>
            <person name="Wilson R.K."/>
            <person name="Waterston R.H."/>
            <person name="Rice C.M."/>
            <person name="Vaudin M."/>
            <person name="Coulson A."/>
            <person name="Nelson D.L."/>
            <person name="Weinstock G."/>
            <person name="Sulston J.E."/>
            <person name="Durbin R.M."/>
            <person name="Hubbard T."/>
            <person name="Gibbs R.A."/>
            <person name="Beck S."/>
            <person name="Rogers J."/>
            <person name="Bentley D.R."/>
        </authorList>
    </citation>
    <scope>NUCLEOTIDE SEQUENCE [LARGE SCALE GENOMIC DNA]</scope>
</reference>
<reference key="6">
    <citation type="submission" date="2005-09" db="EMBL/GenBank/DDBJ databases">
        <authorList>
            <person name="Mural R.J."/>
            <person name="Istrail S."/>
            <person name="Sutton G.G."/>
            <person name="Florea L."/>
            <person name="Halpern A.L."/>
            <person name="Mobarry C.M."/>
            <person name="Lippert R."/>
            <person name="Walenz B."/>
            <person name="Shatkay H."/>
            <person name="Dew I."/>
            <person name="Miller J.R."/>
            <person name="Flanigan M.J."/>
            <person name="Edwards N.J."/>
            <person name="Bolanos R."/>
            <person name="Fasulo D."/>
            <person name="Halldorsson B.V."/>
            <person name="Hannenhalli S."/>
            <person name="Turner R."/>
            <person name="Yooseph S."/>
            <person name="Lu F."/>
            <person name="Nusskern D.R."/>
            <person name="Shue B.C."/>
            <person name="Zheng X.H."/>
            <person name="Zhong F."/>
            <person name="Delcher A.L."/>
            <person name="Huson D.H."/>
            <person name="Kravitz S.A."/>
            <person name="Mouchard L."/>
            <person name="Reinert K."/>
            <person name="Remington K.A."/>
            <person name="Clark A.G."/>
            <person name="Waterman M.S."/>
            <person name="Eichler E.E."/>
            <person name="Adams M.D."/>
            <person name="Hunkapiller M.W."/>
            <person name="Myers E.W."/>
            <person name="Venter J.C."/>
        </authorList>
    </citation>
    <scope>NUCLEOTIDE SEQUENCE [LARGE SCALE GENOMIC DNA]</scope>
</reference>
<reference key="7">
    <citation type="journal article" date="2004" name="Genome Res.">
        <title>The status, quality, and expansion of the NIH full-length cDNA project: the Mammalian Gene Collection (MGC).</title>
        <authorList>
            <consortium name="The MGC Project Team"/>
        </authorList>
    </citation>
    <scope>NUCLEOTIDE SEQUENCE [LARGE SCALE MRNA] (ISOFORM 1)</scope>
    <source>
        <tissue>Pancreas</tissue>
    </source>
</reference>
<reference key="8">
    <citation type="journal article" date="2002" name="Genomics">
        <title>Cloning, expression, and initial characterization of a novel cytokine-like gene family.</title>
        <authorList>
            <person name="Zhu Y."/>
            <person name="Xu G."/>
            <person name="Patel A."/>
            <person name="McLaughlin M.M."/>
            <person name="Silverman C."/>
            <person name="Knecht K.A."/>
            <person name="Sweitzer S."/>
            <person name="Li X."/>
            <person name="McDonnell P."/>
            <person name="Mirabile R."/>
            <person name="Zimmerman D."/>
            <person name="Boyce R."/>
            <person name="Tierney L.A."/>
            <person name="Hu E."/>
            <person name="Livi G.P."/>
            <person name="Wolf B.A."/>
            <person name="Abdel-Meguid S.S."/>
            <person name="Rose G.D."/>
            <person name="Aurora R."/>
            <person name="Hensley P."/>
            <person name="Briggs M."/>
            <person name="Young P.R."/>
        </authorList>
    </citation>
    <scope>CHARACTERIZATION</scope>
</reference>
<dbReference type="EMBL" id="X55448">
    <property type="protein sequence ID" value="CAA39090.1"/>
    <property type="molecule type" value="Genomic_DNA"/>
</dbReference>
<dbReference type="EMBL" id="X87193">
    <property type="protein sequence ID" value="CAA60645.1"/>
    <property type="molecule type" value="mRNA"/>
</dbReference>
<dbReference type="EMBL" id="L44140">
    <property type="protein sequence ID" value="AAA92652.1"/>
    <property type="molecule type" value="Genomic_DNA"/>
</dbReference>
<dbReference type="EMBL" id="AK294116">
    <property type="protein sequence ID" value="BAG57449.1"/>
    <property type="molecule type" value="mRNA"/>
</dbReference>
<dbReference type="EMBL" id="AK314682">
    <property type="protein sequence ID" value="BAG37234.1"/>
    <property type="molecule type" value="mRNA"/>
</dbReference>
<dbReference type="EMBL" id="BX664739">
    <property type="status" value="NOT_ANNOTATED_CDS"/>
    <property type="molecule type" value="Genomic_DNA"/>
</dbReference>
<dbReference type="EMBL" id="CH471172">
    <property type="protein sequence ID" value="EAW72689.1"/>
    <property type="molecule type" value="Genomic_DNA"/>
</dbReference>
<dbReference type="EMBL" id="CH471172">
    <property type="protein sequence ID" value="EAW72692.1"/>
    <property type="molecule type" value="Genomic_DNA"/>
</dbReference>
<dbReference type="EMBL" id="CH471172">
    <property type="protein sequence ID" value="EAW72693.1"/>
    <property type="molecule type" value="Genomic_DNA"/>
</dbReference>
<dbReference type="EMBL" id="CH471172">
    <property type="protein sequence ID" value="EAW72694.1"/>
    <property type="molecule type" value="Genomic_DNA"/>
</dbReference>
<dbReference type="EMBL" id="CH471172">
    <property type="protein sequence ID" value="EAW72695.1"/>
    <property type="molecule type" value="Genomic_DNA"/>
</dbReference>
<dbReference type="EMBL" id="BC008912">
    <property type="protein sequence ID" value="AAH08912.1"/>
    <property type="molecule type" value="mRNA"/>
</dbReference>
<dbReference type="CCDS" id="CCDS35453.1">
    <molecule id="P98173-1"/>
</dbReference>
<dbReference type="CCDS" id="CCDS55542.1">
    <molecule id="P98173-3"/>
</dbReference>
<dbReference type="CCDS" id="CCDS55543.1">
    <molecule id="P98173-2"/>
</dbReference>
<dbReference type="PIR" id="I37095">
    <property type="entry name" value="I37095"/>
</dbReference>
<dbReference type="RefSeq" id="NP_001164603.1">
    <molecule id="P98173-1"/>
    <property type="nucleotide sequence ID" value="NM_001171132.3"/>
</dbReference>
<dbReference type="RefSeq" id="NP_001164604.1">
    <molecule id="P98173-3"/>
    <property type="nucleotide sequence ID" value="NM_001171133.3"/>
</dbReference>
<dbReference type="RefSeq" id="NP_001164605.1">
    <molecule id="P98173-2"/>
    <property type="nucleotide sequence ID" value="NM_001171134.3"/>
</dbReference>
<dbReference type="RefSeq" id="NP_001269240.1">
    <property type="nucleotide sequence ID" value="NM_001282311.1"/>
</dbReference>
<dbReference type="RefSeq" id="NP_001269241.1">
    <molecule id="P98173-1"/>
    <property type="nucleotide sequence ID" value="NM_001282312.2"/>
</dbReference>
<dbReference type="RefSeq" id="NP_068578.2">
    <molecule id="P98173-1"/>
    <property type="nucleotide sequence ID" value="NM_021806.4"/>
</dbReference>
<dbReference type="RefSeq" id="XP_005277936.1">
    <molecule id="P98173-2"/>
    <property type="nucleotide sequence ID" value="XM_005277879.5"/>
</dbReference>
<dbReference type="RefSeq" id="XP_054183450.1">
    <molecule id="P98173-2"/>
    <property type="nucleotide sequence ID" value="XM_054327475.1"/>
</dbReference>
<dbReference type="SMR" id="P98173"/>
<dbReference type="BioGRID" id="121898">
    <property type="interactions" value="29"/>
</dbReference>
<dbReference type="FunCoup" id="P98173">
    <property type="interactions" value="18"/>
</dbReference>
<dbReference type="IntAct" id="P98173">
    <property type="interactions" value="6"/>
</dbReference>
<dbReference type="MINT" id="P98173"/>
<dbReference type="STRING" id="9606.ENSP00000320521"/>
<dbReference type="GlyGen" id="P98173">
    <property type="glycosylation" value="1 site, 2 O-linked glycans (1 site)"/>
</dbReference>
<dbReference type="iPTMnet" id="P98173"/>
<dbReference type="PhosphoSitePlus" id="P98173"/>
<dbReference type="BioMuta" id="FAM3A"/>
<dbReference type="jPOST" id="P98173"/>
<dbReference type="MassIVE" id="P98173"/>
<dbReference type="PaxDb" id="9606-ENSP00000320521"/>
<dbReference type="PeptideAtlas" id="P98173"/>
<dbReference type="ProteomicsDB" id="1753"/>
<dbReference type="ProteomicsDB" id="57807">
    <molecule id="P98173-1"/>
</dbReference>
<dbReference type="ProteomicsDB" id="57808">
    <molecule id="P98173-2"/>
</dbReference>
<dbReference type="Pumba" id="P98173"/>
<dbReference type="Antibodypedia" id="45386">
    <property type="antibodies" value="154 antibodies from 24 providers"/>
</dbReference>
<dbReference type="DNASU" id="60343"/>
<dbReference type="Ensembl" id="ENST00000359889.9">
    <molecule id="P98173-1"/>
    <property type="protein sequence ID" value="ENSP00000352955.5"/>
    <property type="gene ID" value="ENSG00000071889.17"/>
</dbReference>
<dbReference type="Ensembl" id="ENST00000369643.5">
    <molecule id="P98173-1"/>
    <property type="protein sequence ID" value="ENSP00000358657.1"/>
    <property type="gene ID" value="ENSG00000071889.17"/>
</dbReference>
<dbReference type="Ensembl" id="ENST00000393572.5">
    <molecule id="P98173-3"/>
    <property type="protein sequence ID" value="ENSP00000377202.1"/>
    <property type="gene ID" value="ENSG00000071889.17"/>
</dbReference>
<dbReference type="Ensembl" id="ENST00000419205.5">
    <molecule id="P98173-2"/>
    <property type="protein sequence ID" value="ENSP00000393086.2"/>
    <property type="gene ID" value="ENSG00000071889.17"/>
</dbReference>
<dbReference type="Ensembl" id="ENST00000447601.7">
    <molecule id="P98173-1"/>
    <property type="protein sequence ID" value="ENSP00000416146.2"/>
    <property type="gene ID" value="ENSG00000071889.17"/>
</dbReference>
<dbReference type="GeneID" id="60343"/>
<dbReference type="KEGG" id="hsa:60343"/>
<dbReference type="MANE-Select" id="ENST00000447601.7">
    <property type="protein sequence ID" value="ENSP00000416146.2"/>
    <property type="RefSeq nucleotide sequence ID" value="NM_021806.4"/>
    <property type="RefSeq protein sequence ID" value="NP_068578.2"/>
</dbReference>
<dbReference type="UCSC" id="uc004fls.4">
    <molecule id="P98173-1"/>
    <property type="organism name" value="human"/>
</dbReference>
<dbReference type="AGR" id="HGNC:13749"/>
<dbReference type="CTD" id="60343"/>
<dbReference type="DisGeNET" id="60343"/>
<dbReference type="GeneCards" id="FAM3A"/>
<dbReference type="HGNC" id="HGNC:13749">
    <property type="gene designation" value="FAM3A"/>
</dbReference>
<dbReference type="HPA" id="ENSG00000071889">
    <property type="expression patterns" value="Low tissue specificity"/>
</dbReference>
<dbReference type="MIM" id="300492">
    <property type="type" value="gene"/>
</dbReference>
<dbReference type="neXtProt" id="NX_P98173"/>
<dbReference type="OpenTargets" id="ENSG00000071889"/>
<dbReference type="PharmGKB" id="PA38366"/>
<dbReference type="VEuPathDB" id="HostDB:ENSG00000071889"/>
<dbReference type="eggNOG" id="ENOG502QUEU">
    <property type="taxonomic scope" value="Eukaryota"/>
</dbReference>
<dbReference type="GeneTree" id="ENSGT00950000183004"/>
<dbReference type="HOGENOM" id="CLU_099478_1_0_1"/>
<dbReference type="InParanoid" id="P98173"/>
<dbReference type="OrthoDB" id="440755at2759"/>
<dbReference type="PAN-GO" id="P98173">
    <property type="GO annotations" value="1 GO annotation based on evolutionary models"/>
</dbReference>
<dbReference type="PhylomeDB" id="P98173"/>
<dbReference type="TreeFam" id="TF353414"/>
<dbReference type="PathwayCommons" id="P98173"/>
<dbReference type="SignaLink" id="P98173"/>
<dbReference type="BioGRID-ORCS" id="60343">
    <property type="hits" value="17 hits in 777 CRISPR screens"/>
</dbReference>
<dbReference type="ChiTaRS" id="FAM3A">
    <property type="organism name" value="human"/>
</dbReference>
<dbReference type="GenomeRNAi" id="60343"/>
<dbReference type="Pharos" id="P98173">
    <property type="development level" value="Tbio"/>
</dbReference>
<dbReference type="PRO" id="PR:P98173"/>
<dbReference type="Proteomes" id="UP000005640">
    <property type="component" value="Chromosome X"/>
</dbReference>
<dbReference type="RNAct" id="P98173">
    <property type="molecule type" value="protein"/>
</dbReference>
<dbReference type="Bgee" id="ENSG00000071889">
    <property type="expression patterns" value="Expressed in lower esophagus mucosa and 183 other cell types or tissues"/>
</dbReference>
<dbReference type="ExpressionAtlas" id="P98173">
    <property type="expression patterns" value="baseline and differential"/>
</dbReference>
<dbReference type="GO" id="GO:0005615">
    <property type="term" value="C:extracellular space"/>
    <property type="evidence" value="ECO:0000318"/>
    <property type="project" value="GO_Central"/>
</dbReference>
<dbReference type="GO" id="GO:0030246">
    <property type="term" value="F:carbohydrate binding"/>
    <property type="evidence" value="ECO:0007669"/>
    <property type="project" value="UniProtKB-KW"/>
</dbReference>
<dbReference type="GO" id="GO:0019732">
    <property type="term" value="P:antifungal humoral response"/>
    <property type="evidence" value="ECO:0000314"/>
    <property type="project" value="UniProtKB"/>
</dbReference>
<dbReference type="GO" id="GO:0061844">
    <property type="term" value="P:antimicrobial humoral immune response mediated by antimicrobial peptide"/>
    <property type="evidence" value="ECO:0000314"/>
    <property type="project" value="UniProtKB"/>
</dbReference>
<dbReference type="GO" id="GO:0006754">
    <property type="term" value="P:ATP biosynthetic process"/>
    <property type="evidence" value="ECO:0007669"/>
    <property type="project" value="Ensembl"/>
</dbReference>
<dbReference type="GO" id="GO:0055074">
    <property type="term" value="P:calcium ion homeostasis"/>
    <property type="evidence" value="ECO:0007669"/>
    <property type="project" value="Ensembl"/>
</dbReference>
<dbReference type="GO" id="GO:0010467">
    <property type="term" value="P:gene expression"/>
    <property type="evidence" value="ECO:0007669"/>
    <property type="project" value="Ensembl"/>
</dbReference>
<dbReference type="GO" id="GO:0006006">
    <property type="term" value="P:glucose metabolic process"/>
    <property type="evidence" value="ECO:0007669"/>
    <property type="project" value="Ensembl"/>
</dbReference>
<dbReference type="GO" id="GO:0030073">
    <property type="term" value="P:insulin secretion"/>
    <property type="evidence" value="ECO:0007669"/>
    <property type="project" value="Ensembl"/>
</dbReference>
<dbReference type="GO" id="GO:0007005">
    <property type="term" value="P:mitochondrion organization"/>
    <property type="evidence" value="ECO:0007669"/>
    <property type="project" value="Ensembl"/>
</dbReference>
<dbReference type="GO" id="GO:1905035">
    <property type="term" value="P:negative regulation of antifungal innate immune response"/>
    <property type="evidence" value="ECO:0000314"/>
    <property type="project" value="UniProtKB"/>
</dbReference>
<dbReference type="GO" id="GO:0009749">
    <property type="term" value="P:response to glucose"/>
    <property type="evidence" value="ECO:0007669"/>
    <property type="project" value="Ensembl"/>
</dbReference>
<dbReference type="CDD" id="cd13940">
    <property type="entry name" value="ILEI_FAM3C"/>
    <property type="match status" value="1"/>
</dbReference>
<dbReference type="InterPro" id="IPR039220">
    <property type="entry name" value="FAM3"/>
</dbReference>
<dbReference type="InterPro" id="IPR039477">
    <property type="entry name" value="ILEI/PANDER_dom"/>
</dbReference>
<dbReference type="InterPro" id="IPR039475">
    <property type="entry name" value="ILEI_FAM3C"/>
</dbReference>
<dbReference type="PANTHER" id="PTHR14592">
    <property type="entry name" value="UNCHARACTERIZED FAM3"/>
    <property type="match status" value="1"/>
</dbReference>
<dbReference type="Pfam" id="PF15711">
    <property type="entry name" value="ILEI"/>
    <property type="match status" value="1"/>
</dbReference>
<dbReference type="PROSITE" id="PS52031">
    <property type="entry name" value="GG_LECTIN"/>
    <property type="match status" value="1"/>
</dbReference>
<comment type="function">
    <text>May act as a defensin against invading fungal microorganisms.</text>
</comment>
<comment type="subcellular location">
    <subcellularLocation>
        <location evidence="8">Secreted</location>
    </subcellularLocation>
</comment>
<comment type="alternative products">
    <event type="alternative splicing"/>
    <isoform>
        <id>P98173-1</id>
        <name>1</name>
        <sequence type="displayed"/>
    </isoform>
    <isoform>
        <id>P98173-2</id>
        <name>2</name>
        <sequence type="described" ref="VSP_042778"/>
    </isoform>
    <isoform>
        <id>P98173-3</id>
        <name>3</name>
        <sequence type="described" ref="VSP_046733"/>
    </isoform>
</comment>
<comment type="tissue specificity">
    <text>In similar amounts in testis, pancreas, adrenal, placenta, brain, fetal brain, liver, kidney, skeletal muscle and heart.</text>
</comment>
<comment type="similarity">
    <text evidence="8">Belongs to the FAM3 family.</text>
</comment>